<proteinExistence type="inferred from homology"/>
<name>WNT7A_PLEJO</name>
<comment type="function">
    <text evidence="1 2">Ligand for members of the frizzled family of seven transmembrane receptors that functions in the canonical Wnt/beta-catenin signaling pathway (By similarity). Plays an important role in embryonic development, including dorsal versus ventral patterning during limb development, skeleton development and urogenital tract development. Required for central nervous system (CNS) angiogenesis and blood-brain barrier regulation (By similarity).</text>
</comment>
<comment type="subcellular location">
    <subcellularLocation>
        <location evidence="2">Secreted</location>
        <location evidence="2">Extracellular space</location>
        <location evidence="2">Extracellular matrix</location>
    </subcellularLocation>
    <subcellularLocation>
        <location evidence="2">Secreted</location>
    </subcellularLocation>
</comment>
<comment type="PTM">
    <text evidence="3 5">Palmitoleoylation is required for efficient binding to frizzled receptors. Depalmitoleoylation leads to Wnt signaling pathway inhibition.</text>
</comment>
<comment type="similarity">
    <text evidence="7">Belongs to the Wnt family.</text>
</comment>
<sequence>SGSCTTKTCWTTLPKFRELGYVLKDKYNEAVQVEPVRASRNKRPTFLKIKKPLSYLKPMDTDLVYIEKSPNYCEEDPVTGSVGTQGRMCNKTAQHSSGCDLMCCGRGYNTHQYSRVWKCNCKF</sequence>
<feature type="chain" id="PRO_0000200648" description="Protein Wnt-7a">
    <location>
        <begin position="1" status="less than"/>
        <end position="123" status="greater than"/>
    </location>
</feature>
<feature type="region of interest" description="Disordered linker" evidence="1">
    <location>
        <begin position="33"/>
        <end position="61"/>
    </location>
</feature>
<feature type="lipid moiety-binding region" description="O-palmitoleoyl serine; by PORCN" evidence="5">
    <location>
        <position position="1"/>
    </location>
</feature>
<feature type="glycosylation site" description="N-linked (GlcNAc...) asparagine" evidence="6">
    <location>
        <position position="90"/>
    </location>
</feature>
<feature type="disulfide bond" evidence="4">
    <location>
        <begin position="89"/>
        <end position="104"/>
    </location>
</feature>
<feature type="non-terminal residue">
    <location>
        <position position="1"/>
    </location>
</feature>
<feature type="non-terminal residue">
    <location>
        <position position="123"/>
    </location>
</feature>
<organism>
    <name type="scientific">Plethodon jordani</name>
    <name type="common">Red-cheeked salamander</name>
    <dbReference type="NCBI Taxonomy" id="8336"/>
    <lineage>
        <taxon>Eukaryota</taxon>
        <taxon>Metazoa</taxon>
        <taxon>Chordata</taxon>
        <taxon>Craniata</taxon>
        <taxon>Vertebrata</taxon>
        <taxon>Euteleostomi</taxon>
        <taxon>Amphibia</taxon>
        <taxon>Batrachia</taxon>
        <taxon>Caudata</taxon>
        <taxon>Salamandroidea</taxon>
        <taxon>Plethodontidae</taxon>
        <taxon>Plethodontinae</taxon>
        <taxon>Plethodon</taxon>
    </lineage>
</organism>
<keyword id="KW-0217">Developmental protein</keyword>
<keyword id="KW-1015">Disulfide bond</keyword>
<keyword id="KW-0272">Extracellular matrix</keyword>
<keyword id="KW-0325">Glycoprotein</keyword>
<keyword id="KW-0449">Lipoprotein</keyword>
<keyword id="KW-0964">Secreted</keyword>
<keyword id="KW-0879">Wnt signaling pathway</keyword>
<protein>
    <recommendedName>
        <fullName>Protein Wnt-7a</fullName>
    </recommendedName>
</protein>
<accession>P28138</accession>
<reference key="1">
    <citation type="journal article" date="1992" name="Proc. Natl. Acad. Sci. U.S.A.">
        <title>Diversification of the Wnt gene family on the ancestral lineage of vertebrates.</title>
        <authorList>
            <person name="Sidow A."/>
        </authorList>
    </citation>
    <scope>NUCLEOTIDE SEQUENCE [GENOMIC DNA]</scope>
</reference>
<gene>
    <name type="primary">WNT-7A</name>
</gene>
<evidence type="ECO:0000250" key="1">
    <source>
        <dbReference type="UniProtKB" id="O00755"/>
    </source>
</evidence>
<evidence type="ECO:0000250" key="2">
    <source>
        <dbReference type="UniProtKB" id="P24383"/>
    </source>
</evidence>
<evidence type="ECO:0000250" key="3">
    <source>
        <dbReference type="UniProtKB" id="P27467"/>
    </source>
</evidence>
<evidence type="ECO:0000250" key="4">
    <source>
        <dbReference type="UniProtKB" id="P28026"/>
    </source>
</evidence>
<evidence type="ECO:0000250" key="5">
    <source>
        <dbReference type="UniProtKB" id="P56704"/>
    </source>
</evidence>
<evidence type="ECO:0000255" key="6"/>
<evidence type="ECO:0000305" key="7"/>
<dbReference type="EMBL" id="M91295">
    <property type="protein sequence ID" value="AAA49463.1"/>
    <property type="molecule type" value="Genomic_DNA"/>
</dbReference>
<dbReference type="SMR" id="P28138"/>
<dbReference type="GlyCosmos" id="P28138">
    <property type="glycosylation" value="1 site, No reported glycans"/>
</dbReference>
<dbReference type="GO" id="GO:0005615">
    <property type="term" value="C:extracellular space"/>
    <property type="evidence" value="ECO:0007669"/>
    <property type="project" value="TreeGrafter"/>
</dbReference>
<dbReference type="GO" id="GO:0005125">
    <property type="term" value="F:cytokine activity"/>
    <property type="evidence" value="ECO:0007669"/>
    <property type="project" value="TreeGrafter"/>
</dbReference>
<dbReference type="GO" id="GO:0005109">
    <property type="term" value="F:frizzled binding"/>
    <property type="evidence" value="ECO:0007669"/>
    <property type="project" value="TreeGrafter"/>
</dbReference>
<dbReference type="GO" id="GO:0048513">
    <property type="term" value="P:animal organ development"/>
    <property type="evidence" value="ECO:0007669"/>
    <property type="project" value="UniProtKB-ARBA"/>
</dbReference>
<dbReference type="GO" id="GO:0060070">
    <property type="term" value="P:canonical Wnt signaling pathway"/>
    <property type="evidence" value="ECO:0007669"/>
    <property type="project" value="TreeGrafter"/>
</dbReference>
<dbReference type="GO" id="GO:0045165">
    <property type="term" value="P:cell fate commitment"/>
    <property type="evidence" value="ECO:0007669"/>
    <property type="project" value="TreeGrafter"/>
</dbReference>
<dbReference type="GO" id="GO:0030182">
    <property type="term" value="P:neuron differentiation"/>
    <property type="evidence" value="ECO:0007669"/>
    <property type="project" value="TreeGrafter"/>
</dbReference>
<dbReference type="GO" id="GO:0046330">
    <property type="term" value="P:positive regulation of JNK cascade"/>
    <property type="evidence" value="ECO:0007669"/>
    <property type="project" value="TreeGrafter"/>
</dbReference>
<dbReference type="Gene3D" id="3.30.2460.20">
    <property type="match status" value="1"/>
</dbReference>
<dbReference type="InterPro" id="IPR005817">
    <property type="entry name" value="Wnt"/>
</dbReference>
<dbReference type="InterPro" id="IPR013300">
    <property type="entry name" value="Wnt7"/>
</dbReference>
<dbReference type="InterPro" id="IPR043158">
    <property type="entry name" value="Wnt_C"/>
</dbReference>
<dbReference type="PANTHER" id="PTHR12027:SF78">
    <property type="entry name" value="PROTEIN WNT-7A"/>
    <property type="match status" value="1"/>
</dbReference>
<dbReference type="PANTHER" id="PTHR12027">
    <property type="entry name" value="WNT RELATED"/>
    <property type="match status" value="1"/>
</dbReference>
<dbReference type="Pfam" id="PF00110">
    <property type="entry name" value="wnt"/>
    <property type="match status" value="1"/>
</dbReference>
<dbReference type="PRINTS" id="PR01891">
    <property type="entry name" value="WNT7PROTEIN"/>
</dbReference>
<dbReference type="SMART" id="SM00097">
    <property type="entry name" value="WNT1"/>
    <property type="match status" value="1"/>
</dbReference>